<proteinExistence type="inferred from homology"/>
<feature type="chain" id="PRO_0000241689" description="Large ribosomal subunit protein uL24">
    <location>
        <begin position="1"/>
        <end position="105"/>
    </location>
</feature>
<sequence>MANRIKKGDQVVINTGKDKGKQGEVVRVDGDRVIVSNANLIKRHTKPNPQAGVAGGVVEREASIHISNVNIVNPATGKGERVGFKVLEDGRKLRVFRSSGEALDA</sequence>
<dbReference type="EMBL" id="AE013598">
    <property type="protein sequence ID" value="AAW76825.1"/>
    <property type="molecule type" value="Genomic_DNA"/>
</dbReference>
<dbReference type="SMR" id="Q5GWU6"/>
<dbReference type="STRING" id="291331.XOO3571"/>
<dbReference type="KEGG" id="xoo:XOO3571"/>
<dbReference type="PATRIC" id="fig|291331.8.peg.3960"/>
<dbReference type="HOGENOM" id="CLU_093315_2_2_6"/>
<dbReference type="Proteomes" id="UP000006735">
    <property type="component" value="Chromosome"/>
</dbReference>
<dbReference type="GO" id="GO:1990904">
    <property type="term" value="C:ribonucleoprotein complex"/>
    <property type="evidence" value="ECO:0007669"/>
    <property type="project" value="UniProtKB-KW"/>
</dbReference>
<dbReference type="GO" id="GO:0005840">
    <property type="term" value="C:ribosome"/>
    <property type="evidence" value="ECO:0007669"/>
    <property type="project" value="UniProtKB-KW"/>
</dbReference>
<dbReference type="GO" id="GO:0019843">
    <property type="term" value="F:rRNA binding"/>
    <property type="evidence" value="ECO:0007669"/>
    <property type="project" value="UniProtKB-UniRule"/>
</dbReference>
<dbReference type="GO" id="GO:0003735">
    <property type="term" value="F:structural constituent of ribosome"/>
    <property type="evidence" value="ECO:0007669"/>
    <property type="project" value="InterPro"/>
</dbReference>
<dbReference type="GO" id="GO:0006412">
    <property type="term" value="P:translation"/>
    <property type="evidence" value="ECO:0007669"/>
    <property type="project" value="UniProtKB-UniRule"/>
</dbReference>
<dbReference type="CDD" id="cd06089">
    <property type="entry name" value="KOW_RPL26"/>
    <property type="match status" value="1"/>
</dbReference>
<dbReference type="FunFam" id="2.30.30.30:FF:000004">
    <property type="entry name" value="50S ribosomal protein L24"/>
    <property type="match status" value="1"/>
</dbReference>
<dbReference type="Gene3D" id="2.30.30.30">
    <property type="match status" value="1"/>
</dbReference>
<dbReference type="HAMAP" id="MF_01326_B">
    <property type="entry name" value="Ribosomal_uL24_B"/>
    <property type="match status" value="1"/>
</dbReference>
<dbReference type="InterPro" id="IPR005824">
    <property type="entry name" value="KOW"/>
</dbReference>
<dbReference type="InterPro" id="IPR014722">
    <property type="entry name" value="Rib_uL2_dom2"/>
</dbReference>
<dbReference type="InterPro" id="IPR003256">
    <property type="entry name" value="Ribosomal_uL24"/>
</dbReference>
<dbReference type="InterPro" id="IPR041988">
    <property type="entry name" value="Ribosomal_uL24_KOW"/>
</dbReference>
<dbReference type="InterPro" id="IPR008991">
    <property type="entry name" value="Translation_prot_SH3-like_sf"/>
</dbReference>
<dbReference type="NCBIfam" id="TIGR01079">
    <property type="entry name" value="rplX_bact"/>
    <property type="match status" value="1"/>
</dbReference>
<dbReference type="PANTHER" id="PTHR12903">
    <property type="entry name" value="MITOCHONDRIAL RIBOSOMAL PROTEIN L24"/>
    <property type="match status" value="1"/>
</dbReference>
<dbReference type="Pfam" id="PF00467">
    <property type="entry name" value="KOW"/>
    <property type="match status" value="1"/>
</dbReference>
<dbReference type="Pfam" id="PF17136">
    <property type="entry name" value="ribosomal_L24"/>
    <property type="match status" value="1"/>
</dbReference>
<dbReference type="SMART" id="SM00739">
    <property type="entry name" value="KOW"/>
    <property type="match status" value="1"/>
</dbReference>
<dbReference type="SUPFAM" id="SSF50104">
    <property type="entry name" value="Translation proteins SH3-like domain"/>
    <property type="match status" value="1"/>
</dbReference>
<protein>
    <recommendedName>
        <fullName evidence="1">Large ribosomal subunit protein uL24</fullName>
    </recommendedName>
    <alternativeName>
        <fullName evidence="2">50S ribosomal protein L24</fullName>
    </alternativeName>
</protein>
<accession>Q5GWU6</accession>
<organism>
    <name type="scientific">Xanthomonas oryzae pv. oryzae (strain KACC10331 / KXO85)</name>
    <dbReference type="NCBI Taxonomy" id="291331"/>
    <lineage>
        <taxon>Bacteria</taxon>
        <taxon>Pseudomonadati</taxon>
        <taxon>Pseudomonadota</taxon>
        <taxon>Gammaproteobacteria</taxon>
        <taxon>Lysobacterales</taxon>
        <taxon>Lysobacteraceae</taxon>
        <taxon>Xanthomonas</taxon>
    </lineage>
</organism>
<name>RL24_XANOR</name>
<keyword id="KW-1185">Reference proteome</keyword>
<keyword id="KW-0687">Ribonucleoprotein</keyword>
<keyword id="KW-0689">Ribosomal protein</keyword>
<keyword id="KW-0694">RNA-binding</keyword>
<keyword id="KW-0699">rRNA-binding</keyword>
<reference key="1">
    <citation type="journal article" date="2005" name="Nucleic Acids Res.">
        <title>The genome sequence of Xanthomonas oryzae pathovar oryzae KACC10331, the bacterial blight pathogen of rice.</title>
        <authorList>
            <person name="Lee B.-M."/>
            <person name="Park Y.-J."/>
            <person name="Park D.-S."/>
            <person name="Kang H.-W."/>
            <person name="Kim J.-G."/>
            <person name="Song E.-S."/>
            <person name="Park I.-C."/>
            <person name="Yoon U.-H."/>
            <person name="Hahn J.-H."/>
            <person name="Koo B.-S."/>
            <person name="Lee G.-B."/>
            <person name="Kim H."/>
            <person name="Park H.-S."/>
            <person name="Yoon K.-O."/>
            <person name="Kim J.-H."/>
            <person name="Jung C.-H."/>
            <person name="Koh N.-H."/>
            <person name="Seo J.-S."/>
            <person name="Go S.-J."/>
        </authorList>
    </citation>
    <scope>NUCLEOTIDE SEQUENCE [LARGE SCALE GENOMIC DNA]</scope>
    <source>
        <strain>KACC10331 / KXO85</strain>
    </source>
</reference>
<gene>
    <name evidence="1" type="primary">rplX</name>
    <name type="ordered locus">XOO3571</name>
</gene>
<comment type="function">
    <text evidence="1">One of two assembly initiator proteins, it binds directly to the 5'-end of the 23S rRNA, where it nucleates assembly of the 50S subunit.</text>
</comment>
<comment type="function">
    <text evidence="1">One of the proteins that surrounds the polypeptide exit tunnel on the outside of the subunit.</text>
</comment>
<comment type="subunit">
    <text evidence="1">Part of the 50S ribosomal subunit.</text>
</comment>
<comment type="similarity">
    <text evidence="1">Belongs to the universal ribosomal protein uL24 family.</text>
</comment>
<evidence type="ECO:0000255" key="1">
    <source>
        <dbReference type="HAMAP-Rule" id="MF_01326"/>
    </source>
</evidence>
<evidence type="ECO:0000305" key="2"/>